<organism>
    <name type="scientific">African swine fever virus (isolate Tick/South Africa/Pretoriuskop Pr4/1996)</name>
    <name type="common">ASFV</name>
    <dbReference type="NCBI Taxonomy" id="561443"/>
    <lineage>
        <taxon>Viruses</taxon>
        <taxon>Varidnaviria</taxon>
        <taxon>Bamfordvirae</taxon>
        <taxon>Nucleocytoviricota</taxon>
        <taxon>Pokkesviricetes</taxon>
        <taxon>Asfuvirales</taxon>
        <taxon>Asfarviridae</taxon>
        <taxon>Asfivirus</taxon>
        <taxon>African swine fever virus</taxon>
    </lineage>
</organism>
<reference key="1">
    <citation type="submission" date="2003-03" db="EMBL/GenBank/DDBJ databases">
        <title>African swine fever virus genomes.</title>
        <authorList>
            <person name="Kutish G.F."/>
            <person name="Rock D.L."/>
        </authorList>
    </citation>
    <scope>NUCLEOTIDE SEQUENCE [LARGE SCALE GENOMIC DNA]</scope>
</reference>
<dbReference type="EMBL" id="AY261363">
    <property type="status" value="NOT_ANNOTATED_CDS"/>
    <property type="molecule type" value="Genomic_DNA"/>
</dbReference>
<dbReference type="SMR" id="P0C9I0"/>
<dbReference type="Proteomes" id="UP000000859">
    <property type="component" value="Segment"/>
</dbReference>
<dbReference type="GO" id="GO:0044166">
    <property type="term" value="C:host cell endoplasmic reticulum lumen"/>
    <property type="evidence" value="ECO:0007669"/>
    <property type="project" value="UniProtKB-SubCell"/>
</dbReference>
<dbReference type="InterPro" id="IPR004848">
    <property type="entry name" value="ASFV_fam_110"/>
</dbReference>
<dbReference type="Pfam" id="PF01639">
    <property type="entry name" value="v110"/>
    <property type="match status" value="1"/>
</dbReference>
<dbReference type="PROSITE" id="PS00014">
    <property type="entry name" value="ER_TARGET"/>
    <property type="match status" value="1"/>
</dbReference>
<protein>
    <recommendedName>
        <fullName>Protein MGF 110-6L</fullName>
    </recommendedName>
</protein>
<proteinExistence type="inferred from homology"/>
<comment type="function">
    <text evidence="1">Plays a role in virus cell tropism, and may be required for efficient virus replication in macrophages.</text>
</comment>
<comment type="subcellular location">
    <subcellularLocation>
        <location evidence="2">Host endoplasmic reticulum lumen</location>
    </subcellularLocation>
</comment>
<comment type="induction">
    <text evidence="5">Expressed in the early phase of the viral replicative cycle.</text>
</comment>
<comment type="PTM">
    <text evidence="2">N-glycosylated.</text>
</comment>
<comment type="similarity">
    <text evidence="5">Belongs to the asfivirus MGF 110 family.</text>
</comment>
<sequence>MLVIFLGILGLLASQVSSQLVGQLRPTEDPPEEELEYWCAYMESCQFCWDCQDGTCINKIDGSVIYKNEYVKSCLVSRWLDKCMYDLDKGIYHTMNCSQPWSWNPYKYFRKEWKKDEL</sequence>
<gene>
    <name type="ordered locus">Pret-015</name>
</gene>
<feature type="signal peptide" evidence="3">
    <location>
        <begin position="1"/>
        <end position="18"/>
    </location>
</feature>
<feature type="chain" id="PRO_0000373202" description="Protein MGF 110-6L">
    <location>
        <begin position="19"/>
        <end position="118"/>
    </location>
</feature>
<feature type="short sequence motif" description="Prevents secretion from ER" evidence="4">
    <location>
        <begin position="115"/>
        <end position="118"/>
    </location>
</feature>
<feature type="glycosylation site" description="N-linked (GlcNAc...) asparagine; by host" evidence="3">
    <location>
        <position position="96"/>
    </location>
</feature>
<name>1106L_ASFP4</name>
<keyword id="KW-0244">Early protein</keyword>
<keyword id="KW-0325">Glycoprotein</keyword>
<keyword id="KW-1038">Host endoplasmic reticulum</keyword>
<keyword id="KW-0732">Signal</keyword>
<accession>P0C9I0</accession>
<organismHost>
    <name type="scientific">Ornithodoros</name>
    <name type="common">relapsing fever ticks</name>
    <dbReference type="NCBI Taxonomy" id="6937"/>
</organismHost>
<organismHost>
    <name type="scientific">Phacochoerus aethiopicus</name>
    <name type="common">Warthog</name>
    <dbReference type="NCBI Taxonomy" id="85517"/>
</organismHost>
<organismHost>
    <name type="scientific">Phacochoerus africanus</name>
    <name type="common">Warthog</name>
    <dbReference type="NCBI Taxonomy" id="41426"/>
</organismHost>
<organismHost>
    <name type="scientific">Potamochoerus larvatus</name>
    <name type="common">Bushpig</name>
    <dbReference type="NCBI Taxonomy" id="273792"/>
</organismHost>
<organismHost>
    <name type="scientific">Sus scrofa</name>
    <name type="common">Pig</name>
    <dbReference type="NCBI Taxonomy" id="9823"/>
</organismHost>
<evidence type="ECO:0000250" key="1"/>
<evidence type="ECO:0000250" key="2">
    <source>
        <dbReference type="UniProtKB" id="P68744"/>
    </source>
</evidence>
<evidence type="ECO:0000255" key="3"/>
<evidence type="ECO:0000255" key="4">
    <source>
        <dbReference type="PROSITE-ProRule" id="PRU10138"/>
    </source>
</evidence>
<evidence type="ECO:0000305" key="5"/>